<comment type="function">
    <text evidence="1">RNA-directed RNA polymerase that catalyzes the transcription of viral mRNAs, their capping and polyadenylation. The template is composed of the viral RNA tightly encapsidated by the nucleoprotein (N). The viral polymerase binds to the genomic RNA at the 3' leader promoter, and transcribes subsequently all viral mRNAs with a decreasing efficiency. The first gene is the most transcribed, and the last the least transcribed. The viral phosphoprotein acts as a processivity factor. Capping is concomitant with initiation of mRNA transcription. Indeed, a GDP polyribonucleotidyl transferase (PRNTase) adds the cap structure when the nascent RNA chain length has reached few nucleotides. Ribose 2'-O methylation of viral mRNA cap precedes and facilitates subsequent guanine-N-7 methylation, both activities being carried by the viral polymerase. Polyadenylation of mRNAs occur by a stuttering mechanism at a slipery stop site present at the end viral genes. After finishing transcription of a mRNA, the polymerase can resume transcription of the downstream gene.</text>
</comment>
<comment type="function">
    <text evidence="1">RNA-directed RNA polymerase that catalyzes the replication of viral genomic RNA. The template is composed of the viral RNA tightly encapsidated by the nucleoprotein (N). The replicase mode is dependent on intracellular N protein concentration. In this mode, the polymerase replicates the whole viral genome without recognizing transcriptional signals, and the replicated genome is not caped or polyadenylated.</text>
</comment>
<comment type="catalytic activity">
    <reaction evidence="3">
        <text>RNA(n) + a ribonucleoside 5'-triphosphate = RNA(n+1) + diphosphate</text>
        <dbReference type="Rhea" id="RHEA:21248"/>
        <dbReference type="Rhea" id="RHEA-COMP:14527"/>
        <dbReference type="Rhea" id="RHEA-COMP:17342"/>
        <dbReference type="ChEBI" id="CHEBI:33019"/>
        <dbReference type="ChEBI" id="CHEBI:61557"/>
        <dbReference type="ChEBI" id="CHEBI:140395"/>
        <dbReference type="EC" id="2.7.7.48"/>
    </reaction>
</comment>
<comment type="catalytic activity">
    <reaction evidence="1">
        <text>a 5'-end (5'-triphosphoguanosine)-adenylyl-adenylyl-cytidylyl-adenosine in mRNA + 2 S-adenosyl-L-methionine = a 5'-end (N(7)-methyl 5'-triphosphoguanosine)-(2'-O-methyladenylyl)-adenylyl-cytidylyl-adenosine in mRNA + 2 S-adenosyl-L-homocysteine + H(+)</text>
        <dbReference type="Rhea" id="RHEA:65376"/>
        <dbReference type="Rhea" id="RHEA-COMP:16797"/>
        <dbReference type="Rhea" id="RHEA-COMP:16798"/>
        <dbReference type="ChEBI" id="CHEBI:15378"/>
        <dbReference type="ChEBI" id="CHEBI:57856"/>
        <dbReference type="ChEBI" id="CHEBI:59789"/>
        <dbReference type="ChEBI" id="CHEBI:156483"/>
        <dbReference type="ChEBI" id="CHEBI:156484"/>
        <dbReference type="EC" id="2.1.1.375"/>
    </reaction>
</comment>
<comment type="catalytic activity">
    <reaction evidence="1">
        <text>a 5'-end (5'-triphosphoguanosine)-adenylyl-adenylyl-cytidylyl-adenosine in mRNA + S-adenosyl-L-methionine = a 5'-end (5'-triphosphoguanosine)-(2'-O-methyladenylyl)-adenylyl-cytidylyl-adenosine in mRNA + S-adenosyl-L-homocysteine + H(+)</text>
        <dbReference type="Rhea" id="RHEA:65380"/>
        <dbReference type="Rhea" id="RHEA-COMP:16797"/>
        <dbReference type="Rhea" id="RHEA-COMP:16801"/>
        <dbReference type="ChEBI" id="CHEBI:15378"/>
        <dbReference type="ChEBI" id="CHEBI:57856"/>
        <dbReference type="ChEBI" id="CHEBI:59789"/>
        <dbReference type="ChEBI" id="CHEBI:156482"/>
        <dbReference type="ChEBI" id="CHEBI:156484"/>
    </reaction>
</comment>
<comment type="catalytic activity">
    <reaction evidence="2">
        <text>a 5'-end triphospho-adenylyl-adenylyl-cytidylyl-adenosine in mRNA + GDP + H(+) = a 5'-end (5'-triphosphoguanosine)-adenylyl-adenylyl-cytidylyl-adenosine in mRNA + diphosphate</text>
        <dbReference type="Rhea" id="RHEA:65436"/>
        <dbReference type="Rhea" id="RHEA-COMP:16797"/>
        <dbReference type="Rhea" id="RHEA-COMP:16799"/>
        <dbReference type="ChEBI" id="CHEBI:15378"/>
        <dbReference type="ChEBI" id="CHEBI:33019"/>
        <dbReference type="ChEBI" id="CHEBI:58189"/>
        <dbReference type="ChEBI" id="CHEBI:156484"/>
        <dbReference type="ChEBI" id="CHEBI:156503"/>
        <dbReference type="EC" id="2.7.7.88"/>
    </reaction>
</comment>
<comment type="catalytic activity">
    <reaction evidence="1">
        <text>a 5'-end (5'-triphosphoguanosine)-(2'-O-methyladenylyl)-adenylyl-cytidylyl-adenosine in mRNA + S-adenosyl-L-methionine = a 5'-end (N(7)-methyl 5'-triphosphoguanosine)-(2'-O-methyladenylyl)-adenylyl-cytidylyl-adenosine in mRNA + S-adenosyl-L-homocysteine</text>
        <dbReference type="Rhea" id="RHEA:65440"/>
        <dbReference type="Rhea" id="RHEA-COMP:16798"/>
        <dbReference type="Rhea" id="RHEA-COMP:16801"/>
        <dbReference type="ChEBI" id="CHEBI:57856"/>
        <dbReference type="ChEBI" id="CHEBI:59789"/>
        <dbReference type="ChEBI" id="CHEBI:156482"/>
        <dbReference type="ChEBI" id="CHEBI:156483"/>
    </reaction>
</comment>
<comment type="catalytic activity">
    <reaction evidence="2">
        <text>GTP + H2O = GDP + phosphate + H(+)</text>
        <dbReference type="Rhea" id="RHEA:19669"/>
        <dbReference type="ChEBI" id="CHEBI:15377"/>
        <dbReference type="ChEBI" id="CHEBI:15378"/>
        <dbReference type="ChEBI" id="CHEBI:37565"/>
        <dbReference type="ChEBI" id="CHEBI:43474"/>
        <dbReference type="ChEBI" id="CHEBI:58189"/>
    </reaction>
</comment>
<comment type="subunit">
    <text evidence="1">May form homodimer. Interacts with the P protein.</text>
</comment>
<comment type="subcellular location">
    <subcellularLocation>
        <location evidence="1">Virion</location>
    </subcellularLocation>
    <subcellularLocation>
        <location evidence="1">Host cytoplasm</location>
    </subcellularLocation>
    <text evidence="1">L and P are packaged asymmetrically towards the blunt end of the virus.</text>
</comment>
<comment type="similarity">
    <text evidence="5">Belongs to the rhabdoviridae protein L family.</text>
</comment>
<dbReference type="EC" id="2.7.7.48" evidence="2"/>
<dbReference type="EC" id="3.6.1.-" evidence="1"/>
<dbReference type="EC" id="2.7.7.88" evidence="1"/>
<dbReference type="EC" id="2.1.1.375" evidence="1"/>
<dbReference type="EMBL" id="AM689309">
    <property type="protein sequence ID" value="CBA18272.1"/>
    <property type="molecule type" value="Genomic_RNA"/>
</dbReference>
<dbReference type="RefSeq" id="YP_003126913.1">
    <property type="nucleotide sequence ID" value="NC_013135.1"/>
</dbReference>
<dbReference type="SMR" id="C6S3N3"/>
<dbReference type="GeneID" id="8363508"/>
<dbReference type="KEGG" id="vg:8363508"/>
<dbReference type="Proteomes" id="UP000029768">
    <property type="component" value="Genome"/>
</dbReference>
<dbReference type="GO" id="GO:0030430">
    <property type="term" value="C:host cell cytoplasm"/>
    <property type="evidence" value="ECO:0007669"/>
    <property type="project" value="UniProtKB-SubCell"/>
</dbReference>
<dbReference type="GO" id="GO:0044423">
    <property type="term" value="C:virion component"/>
    <property type="evidence" value="ECO:0007669"/>
    <property type="project" value="UniProtKB-KW"/>
</dbReference>
<dbReference type="GO" id="GO:0005524">
    <property type="term" value="F:ATP binding"/>
    <property type="evidence" value="ECO:0007669"/>
    <property type="project" value="UniProtKB-KW"/>
</dbReference>
<dbReference type="GO" id="GO:0003924">
    <property type="term" value="F:GTPase activity"/>
    <property type="evidence" value="ECO:0007669"/>
    <property type="project" value="RHEA"/>
</dbReference>
<dbReference type="GO" id="GO:0004482">
    <property type="term" value="F:mRNA 5'-cap (guanine-N7-)-methyltransferase activity"/>
    <property type="evidence" value="ECO:0007669"/>
    <property type="project" value="InterPro"/>
</dbReference>
<dbReference type="GO" id="GO:0003968">
    <property type="term" value="F:RNA-directed RNA polymerase activity"/>
    <property type="evidence" value="ECO:0007669"/>
    <property type="project" value="UniProtKB-KW"/>
</dbReference>
<dbReference type="GO" id="GO:0019083">
    <property type="term" value="P:viral transcription"/>
    <property type="evidence" value="ECO:0007669"/>
    <property type="project" value="UniProtKB-KW"/>
</dbReference>
<dbReference type="InterPro" id="IPR039530">
    <property type="entry name" value="L_methyltransferase_rhabdo"/>
</dbReference>
<dbReference type="InterPro" id="IPR039736">
    <property type="entry name" value="L_poly_C"/>
</dbReference>
<dbReference type="InterPro" id="IPR048397">
    <property type="entry name" value="Methyltrans_Mon_CD"/>
</dbReference>
<dbReference type="InterPro" id="IPR026890">
    <property type="entry name" value="Mononeg_mRNAcap"/>
</dbReference>
<dbReference type="InterPro" id="IPR014023">
    <property type="entry name" value="Mononeg_RNA_pol_cat"/>
</dbReference>
<dbReference type="InterPro" id="IPR025786">
    <property type="entry name" value="Mononega_L_MeTrfase"/>
</dbReference>
<dbReference type="NCBIfam" id="TIGR04198">
    <property type="entry name" value="paramyx_RNAcap"/>
    <property type="match status" value="1"/>
</dbReference>
<dbReference type="Pfam" id="PF21080">
    <property type="entry name" value="Methyltrans_Mon_1st"/>
    <property type="match status" value="1"/>
</dbReference>
<dbReference type="Pfam" id="PF14314">
    <property type="entry name" value="Methyltrans_Mon_2nd"/>
    <property type="match status" value="1"/>
</dbReference>
<dbReference type="Pfam" id="PF14318">
    <property type="entry name" value="Mononeg_mRNAcap"/>
    <property type="match status" value="1"/>
</dbReference>
<dbReference type="Pfam" id="PF00946">
    <property type="entry name" value="Mononeg_RNA_pol"/>
    <property type="match status" value="1"/>
</dbReference>
<dbReference type="PROSITE" id="PS50526">
    <property type="entry name" value="RDRP_SSRNA_NEG_NONSEG"/>
    <property type="match status" value="1"/>
</dbReference>
<dbReference type="PROSITE" id="PS51590">
    <property type="entry name" value="SAM_MT_MNV_L"/>
    <property type="match status" value="1"/>
</dbReference>
<organismHost>
    <name type="scientific">Drosophila melanogaster</name>
    <name type="common">Fruit fly</name>
    <dbReference type="NCBI Taxonomy" id="7227"/>
</organismHost>
<accession>C6S3N3</accession>
<reference key="1">
    <citation type="journal article" date="2007" name="Mol. Ecol.">
        <title>The recent spread of a vertically transmitted virus through populations of Drosophila melanogaster.</title>
        <authorList>
            <person name="Carpenter J.A."/>
            <person name="Obbard D.J."/>
            <person name="Maside X."/>
            <person name="Jiggins F.M."/>
        </authorList>
    </citation>
    <scope>NUCLEOTIDE SEQUENCE [GENOMIC RNA]</scope>
    <source>
        <strain>AP30</strain>
    </source>
</reference>
<reference key="2">
    <citation type="submission" date="2009-08" db="EMBL/GenBank/DDBJ databases">
        <authorList>
            <person name="Jiggins F.M."/>
        </authorList>
    </citation>
    <scope>NUCLEOTIDE SEQUENCE [GENOMIC RNA]</scope>
    <source>
        <strain>AP30</strain>
    </source>
</reference>
<name>L_DMSVA</name>
<feature type="chain" id="PRO_0000432054" description="RNA-directed RNA polymerase L">
    <location>
        <begin position="1"/>
        <end position="2129"/>
    </location>
</feature>
<feature type="domain" description="RdRp catalytic" evidence="3">
    <location>
        <begin position="598"/>
        <end position="785"/>
    </location>
</feature>
<feature type="domain" description="Mononegavirus-type SAM-dependent 2'-O-MTase" evidence="4">
    <location>
        <begin position="1654"/>
        <end position="1851"/>
    </location>
</feature>
<proteinExistence type="inferred from homology"/>
<keyword id="KW-0067">ATP-binding</keyword>
<keyword id="KW-1035">Host cytoplasm</keyword>
<keyword id="KW-0378">Hydrolase</keyword>
<keyword id="KW-0489">Methyltransferase</keyword>
<keyword id="KW-0506">mRNA capping</keyword>
<keyword id="KW-0507">mRNA processing</keyword>
<keyword id="KW-0511">Multifunctional enzyme</keyword>
<keyword id="KW-0547">Nucleotide-binding</keyword>
<keyword id="KW-0548">Nucleotidyltransferase</keyword>
<keyword id="KW-1185">Reference proteome</keyword>
<keyword id="KW-0696">RNA-directed RNA polymerase</keyword>
<keyword id="KW-0949">S-adenosyl-L-methionine</keyword>
<keyword id="KW-0808">Transferase</keyword>
<keyword id="KW-0693">Viral RNA replication</keyword>
<keyword id="KW-1195">Viral transcription</keyword>
<keyword id="KW-0946">Virion</keyword>
<protein>
    <recommendedName>
        <fullName>RNA-directed RNA polymerase L</fullName>
        <shortName>Protein L</shortName>
    </recommendedName>
    <alternativeName>
        <fullName>Large structural protein</fullName>
    </alternativeName>
    <alternativeName>
        <fullName>Replicase</fullName>
    </alternativeName>
    <alternativeName>
        <fullName>Transcriptase</fullName>
    </alternativeName>
    <domain>
        <recommendedName>
            <fullName>RNA-directed RNA polymerase</fullName>
            <ecNumber evidence="2">2.7.7.48</ecNumber>
        </recommendedName>
    </domain>
    <domain>
        <recommendedName>
            <fullName evidence="1">GTP phosphohydrolase</fullName>
            <ecNumber evidence="1">3.6.1.-</ecNumber>
        </recommendedName>
    </domain>
    <domain>
        <recommendedName>
            <fullName evidence="5">GDP polyribonucleotidyltransferase</fullName>
            <ecNumber evidence="1">2.7.7.88</ecNumber>
        </recommendedName>
        <alternativeName>
            <fullName evidence="5">PRNTase</fullName>
        </alternativeName>
    </domain>
    <domain>
        <recommendedName>
            <fullName evidence="5">mRNA cap methyltransferase</fullName>
            <ecNumber evidence="1">2.1.1.375</ecNumber>
        </recommendedName>
        <alternativeName>
            <fullName evidence="1">mRNA (guanine-N(7)-)-methyltransferase</fullName>
            <shortName evidence="1">G-N7-MTase</shortName>
        </alternativeName>
        <alternativeName>
            <fullName evidence="1">mRNA (nucleoside-2'-O-)-methyltransferase</fullName>
            <shortName evidence="1">N1-2'-O-MTase</shortName>
        </alternativeName>
    </domain>
</protein>
<sequence length="2129" mass="241480">MDFEIEDPYDPFSMDAYLDPQDPSFGDLESMRHLSNVDYSLNSPMIADELEAFIRWLQCGCTDPRWNEDRWVRTKQGLFPGQSPTTIEGAATFSGWFGNFNLKHRYYVVRQFRMILEKAQADSEETKPVVDAFLRGWINHKGVTLTSKIALPEEELKWGYYFWELHIVTLHLNCTTDQERTHLIKSFKSKSRGMPDVFDFTLYTRNFGPLSIAGGYVYMFDHNRMLDRNAILMMKDTYVARFNSFLALSNRADCVFPEDAHYRLQMLYELGDMVLDEGGTSGYNGLKMLEAMCSSRITDLAQSRKPLIPDFPDFRAHVKAKVIEESVNTPSISKMYELIEGTTNYDTLLTFYGSFRHWGHPYINYLAGLEKLYMQTTVEKEIDQEYVEKLASDLAFLVIQDRFRKTKKWPVDPLLIDKDHPLVDYIRTSSWPNNSIIKNFGDGWHTLPLTKCYDIPDVIDPSLLYSDKSHSMTRSEVREWMTSHPGKPIPSRKVLSTLLNSPSTNWPMFLQQVNDSGIPIEQLIIGLMAKEREQKIDGRFFSLMSWDIRDYFVMTEYLIKTHFVPLFKGLTMADDLTTVIGKILENSRGQGEADYENLTITDHIDYEKWNNHQRGEANNPIFLVMGKFLGYPHLIERTHEIFEKSWIYYLNRADLMDFDGEGNLMNRTELRVCWNGQKGGLEGLRQKGWSICNLLVLRRESLATNTVVKTLAQGDNQVLSSRYRIRTSRDQNQLQSNIRDICKNNRSLMERIRIGTGKLGLIINHDETIKSTEYMNYGKTCVIHGNIRNLETKRWSRVTCVTNDQLPTLSNVMATIGSNALTVSHYSDSPINSMYHYNFMGNFVRIMNEIHNPALRGPVSSIEGVTGQSFSRLSYLLAVLYLDPSMGGACGMSLTRFLIRMFPDPITESLTFLRIVAMNVHSDEVRQTFIQFGNPKLKVFSPEDLSKLLEDPLSINVPKGLSATNLIKDAIKLSLHKSVDEIANEIIAEAVIHQKDHEEGFLMHLTQISPLFPRFLSEYKAGTYLGIAEGLIGLFQNSKTIRNQFRRNLDIGYDNIVIKSEIATIRDLTGYRFEDAEKVEVWSCSSTQADYLRRVSWQQVVYGATIPHPAELFGLPLRAAPACPNCTTTFPMNLYISVLIPLGFKGLKDTRGTCVAYLGSSTTESTGIVNPWEKEAVVPVIKRAASLRNGIGWFIEPGSNLAQSILNNLQSLTGESWSQNSGGVRRTGSALHRFSCSRQSSGGYTAQNPSKLTRMIATTNYLADLGDENYDFMYQSCLLHALISVGEIHPVDGSQGYYHQHVNCTSCLRPIKEVTLESPAPYSHTITSNLLDKWKPDGSKWSVSRPSIPLRSGKWECVSHDRQSYHVGFIQGFIYGDSVWGIRSMADDPALFPLSFRNKVNPRAYLLGILHGLLRSCTVSVVHQRCFRSSRAVKQTTLGLCSMTVSRLVQNDGFLNILRDEQFTAVFRSIPHRIPPSYPMVTQDIGDLASNYLKSQLMTEGLAYFRSVKSGSGDEAWIFADANHPMIVSLVTVSGLMTKILAKDIWQKRDLEELKELRSLSVQAREQDDPHTDITAMESLAAEWVVCSNQETRHAVKYNTRTESITDRRLTVTWGDEYTSSADFVTVVFSVEEIRTPPGMLIPRIQNPLISGLRTAQIATGSHYKLRSILSKLRLNVRGALVGGDGSGGLTALVCRMYPTSRVIFNSICDFSDVRLKGTTPAPPSALSHSLNDCTQVVNYSDSWAHPSDLTDTKTWKYFVDITKSKSIQVDLIILDMEVVDEISISKIEDNLMRYGPQLLTRDGVILFKTYLTRIFKAQEMILTKCGHVFSQVELWYSDLSSSQTSEVYVLMSGQTKLSHLQVRKPDLMQLRTDVSSFPVFASPLLEFKRARKVAGLDLTVGVPPLLLPEPGPEMINLLSSLGVRPDISFSITRSFGDNLSTEFLPLHLFLLALNGIYDVTTGYRTPPGPPSDQVCLKLGIWIVGYRIWSGYVQDSYAKTSFGQRLIDNFVPFNFWNKQIGRSWFPHWSLIKPQTYTKNIQLDSEMAHIGSVIRILHRNFPKARRNPPGDFVDRNCSRINKGISCLNMDMKTGILRWMGDGQDLSGTNVTTRISNFYVTQDDQTASFRN</sequence>
<evidence type="ECO:0000250" key="1">
    <source>
        <dbReference type="UniProtKB" id="P03523"/>
    </source>
</evidence>
<evidence type="ECO:0000250" key="2">
    <source>
        <dbReference type="UniProtKB" id="P28887"/>
    </source>
</evidence>
<evidence type="ECO:0000255" key="3">
    <source>
        <dbReference type="PROSITE-ProRule" id="PRU00539"/>
    </source>
</evidence>
<evidence type="ECO:0000255" key="4">
    <source>
        <dbReference type="PROSITE-ProRule" id="PRU00923"/>
    </source>
</evidence>
<evidence type="ECO:0000305" key="5"/>
<gene>
    <name type="primary">L</name>
</gene>
<organism>
    <name type="scientific">Drosophila melanogaster sigma virus (isolate Drosophila/USA/AP30/2005)</name>
    <name type="common">DMelSV</name>
    <dbReference type="NCBI Taxonomy" id="666363"/>
    <lineage>
        <taxon>Viruses</taxon>
        <taxon>Riboviria</taxon>
        <taxon>Orthornavirae</taxon>
        <taxon>Negarnaviricota</taxon>
        <taxon>Haploviricotina</taxon>
        <taxon>Monjiviricetes</taxon>
        <taxon>Mononegavirales</taxon>
        <taxon>Rhabdoviridae</taxon>
        <taxon>Alpharhabdovirinae</taxon>
        <taxon>Sigmavirus</taxon>
        <taxon>Sigmavirus melanogaster</taxon>
    </lineage>
</organism>